<accession>Q09344</accession>
<accession>A0A5S9MRW9</accession>
<accession>Q5BHI4</accession>
<protein>
    <recommendedName>
        <fullName evidence="5">Serpentine receptor class alpha/beta-14</fullName>
        <shortName evidence="4">Protein srab-14</shortName>
    </recommendedName>
</protein>
<sequence>MPSDDFVKTARKALISHSVSIQNYTEDDCQIAFHATTNSFMQTIRLVHIFFCTFGAISSSLFIYVLLNSSSRNLHRNLRISLASLAFAALIACLQLDFIAFYHLALTLTADNACDSMYEARKCAILRFPVVLSIYATLCGIIVLAIERTIATLKYKTYEANGSRVVGLVLVTGQWFVCIIVAVFSVLLRSDPGYVHYCTAYVSHPRTSVFSLCFMSALEVATLVYFVLLLQSNQRRQVNEFVNKAMHSLSERYQLQENVRIMKILIPSITVHAILGFIGLGSMLAFAIIYRYADERLIVGFAPFSEVVLLVIPIYAVVFPIVAVVQNKQLRLASRRALPFLFNPESPETSEMLPADPPPLHKIITSRPSRQLEKESNTHFDLLNEMWKK</sequence>
<evidence type="ECO:0000255" key="1"/>
<evidence type="ECO:0000255" key="2">
    <source>
        <dbReference type="PROSITE-ProRule" id="PRU00498"/>
    </source>
</evidence>
<evidence type="ECO:0000255" key="3">
    <source>
        <dbReference type="PROSITE-ProRule" id="PRU00521"/>
    </source>
</evidence>
<evidence type="ECO:0000305" key="4"/>
<evidence type="ECO:0000312" key="5">
    <source>
        <dbReference type="WormBase" id="R10H1.2"/>
    </source>
</evidence>
<gene>
    <name evidence="5" type="primary">srab-14</name>
    <name evidence="5" type="ORF">R10H1.2</name>
</gene>
<keyword id="KW-1015">Disulfide bond</keyword>
<keyword id="KW-0297">G-protein coupled receptor</keyword>
<keyword id="KW-0325">Glycoprotein</keyword>
<keyword id="KW-0472">Membrane</keyword>
<keyword id="KW-0675">Receptor</keyword>
<keyword id="KW-1185">Reference proteome</keyword>
<keyword id="KW-0807">Transducer</keyword>
<keyword id="KW-0812">Transmembrane</keyword>
<keyword id="KW-1133">Transmembrane helix</keyword>
<proteinExistence type="inferred from homology"/>
<dbReference type="EMBL" id="BX284602">
    <property type="protein sequence ID" value="CAA0059169.1"/>
    <property type="molecule type" value="Genomic_DNA"/>
</dbReference>
<dbReference type="PIR" id="T16710">
    <property type="entry name" value="T16710"/>
</dbReference>
<dbReference type="RefSeq" id="NP_001022280.2">
    <property type="nucleotide sequence ID" value="NM_001027109.4"/>
</dbReference>
<dbReference type="SMR" id="Q09344"/>
<dbReference type="GlyCosmos" id="Q09344">
    <property type="glycosylation" value="1 site, No reported glycans"/>
</dbReference>
<dbReference type="PaxDb" id="6239-R10H1.2a"/>
<dbReference type="EnsemblMetazoa" id="R10H1.2.1">
    <property type="protein sequence ID" value="R10H1.2.1"/>
    <property type="gene ID" value="WBGene00019999"/>
</dbReference>
<dbReference type="GeneID" id="187787"/>
<dbReference type="UCSC" id="R10H1.2a">
    <property type="organism name" value="c. elegans"/>
</dbReference>
<dbReference type="AGR" id="WB:WBGene00019999"/>
<dbReference type="WormBase" id="R10H1.2">
    <property type="protein sequence ID" value="CE53785"/>
    <property type="gene ID" value="WBGene00019999"/>
    <property type="gene designation" value="srab-14"/>
</dbReference>
<dbReference type="eggNOG" id="ENOG502T0W0">
    <property type="taxonomic scope" value="Eukaryota"/>
</dbReference>
<dbReference type="HOGENOM" id="CLU_065871_0_0_1"/>
<dbReference type="InParanoid" id="Q09344"/>
<dbReference type="OrthoDB" id="5794765at2759"/>
<dbReference type="PhylomeDB" id="Q09344"/>
<dbReference type="PRO" id="PR:Q09344"/>
<dbReference type="Proteomes" id="UP000001940">
    <property type="component" value="Chromosome II"/>
</dbReference>
<dbReference type="Bgee" id="WBGene00019999">
    <property type="expression patterns" value="Expressed in larva and 2 other cell types or tissues"/>
</dbReference>
<dbReference type="GO" id="GO:0016020">
    <property type="term" value="C:membrane"/>
    <property type="evidence" value="ECO:0007669"/>
    <property type="project" value="UniProtKB-SubCell"/>
</dbReference>
<dbReference type="GO" id="GO:0004930">
    <property type="term" value="F:G protein-coupled receptor activity"/>
    <property type="evidence" value="ECO:0007669"/>
    <property type="project" value="UniProtKB-KW"/>
</dbReference>
<dbReference type="CDD" id="cd00637">
    <property type="entry name" value="7tm_classA_rhodopsin-like"/>
    <property type="match status" value="1"/>
</dbReference>
<dbReference type="Gene3D" id="1.20.1070.10">
    <property type="entry name" value="Rhodopsin 7-helix transmembrane proteins"/>
    <property type="match status" value="1"/>
</dbReference>
<dbReference type="InterPro" id="IPR019408">
    <property type="entry name" value="7TM_GPCR_serpentine_rcpt_Srab"/>
</dbReference>
<dbReference type="InterPro" id="IPR017452">
    <property type="entry name" value="GPCR_Rhodpsn_7TM"/>
</dbReference>
<dbReference type="InterPro" id="IPR053286">
    <property type="entry name" value="Nematode_rcpt-like_srab"/>
</dbReference>
<dbReference type="PANTHER" id="PTHR46561:SF11">
    <property type="entry name" value="SERPENTINE RECEPTOR CLASS ALPHA_BETA-14"/>
    <property type="match status" value="1"/>
</dbReference>
<dbReference type="PANTHER" id="PTHR46561">
    <property type="entry name" value="SERPENTINE RECEPTOR, CLASS AB (CLASS A-LIKE)-RELATED"/>
    <property type="match status" value="1"/>
</dbReference>
<dbReference type="Pfam" id="PF10292">
    <property type="entry name" value="7TM_GPCR_Srab"/>
    <property type="match status" value="1"/>
</dbReference>
<dbReference type="SUPFAM" id="SSF81321">
    <property type="entry name" value="Family A G protein-coupled receptor-like"/>
    <property type="match status" value="1"/>
</dbReference>
<comment type="subcellular location">
    <subcellularLocation>
        <location evidence="1">Membrane</location>
        <topology evidence="1">Multi-pass membrane protein</topology>
    </subcellularLocation>
</comment>
<comment type="similarity">
    <text evidence="4">Belongs to the nematode receptor-like protein srab family.</text>
</comment>
<name>SRABE_CAEEL</name>
<feature type="chain" id="PRO_0000065437" description="Serpentine receptor class alpha/beta-14">
    <location>
        <begin position="1"/>
        <end position="389"/>
    </location>
</feature>
<feature type="topological domain" description="Extracellular" evidence="4">
    <location>
        <begin position="1"/>
        <end position="45"/>
    </location>
</feature>
<feature type="transmembrane region" description="Helical; Name=1" evidence="1">
    <location>
        <begin position="46"/>
        <end position="66"/>
    </location>
</feature>
<feature type="topological domain" description="Cytoplasmic" evidence="4">
    <location>
        <begin position="67"/>
        <end position="81"/>
    </location>
</feature>
<feature type="transmembrane region" description="Helical; Name=2" evidence="1">
    <location>
        <begin position="82"/>
        <end position="102"/>
    </location>
</feature>
<feature type="topological domain" description="Extracellular" evidence="4">
    <location>
        <begin position="103"/>
        <end position="123"/>
    </location>
</feature>
<feature type="transmembrane region" description="Helical; Name=3" evidence="1">
    <location>
        <begin position="124"/>
        <end position="144"/>
    </location>
</feature>
<feature type="topological domain" description="Cytoplasmic" evidence="4">
    <location>
        <begin position="145"/>
        <end position="167"/>
    </location>
</feature>
<feature type="transmembrane region" description="Helical; Name=4" evidence="1">
    <location>
        <begin position="168"/>
        <end position="188"/>
    </location>
</feature>
<feature type="topological domain" description="Extracellular" evidence="4">
    <location>
        <begin position="189"/>
        <end position="208"/>
    </location>
</feature>
<feature type="transmembrane region" description="Helical; Name=5" evidence="1">
    <location>
        <begin position="209"/>
        <end position="229"/>
    </location>
</feature>
<feature type="topological domain" description="Cytoplasmic" evidence="4">
    <location>
        <begin position="230"/>
        <end position="268"/>
    </location>
</feature>
<feature type="transmembrane region" description="Helical; Name=6" evidence="1">
    <location>
        <begin position="269"/>
        <end position="289"/>
    </location>
</feature>
<feature type="topological domain" description="Extracellular" evidence="4">
    <location>
        <begin position="290"/>
        <end position="303"/>
    </location>
</feature>
<feature type="transmembrane region" description="Helical; Name=7" evidence="1">
    <location>
        <begin position="304"/>
        <end position="324"/>
    </location>
</feature>
<feature type="topological domain" description="Cytoplasmic" evidence="4">
    <location>
        <begin position="325"/>
        <end position="389"/>
    </location>
</feature>
<feature type="glycosylation site" description="N-linked (GlcNAc...) asparagine" evidence="2">
    <location>
        <position position="23"/>
    </location>
</feature>
<feature type="disulfide bond" evidence="3">
    <location>
        <begin position="123"/>
        <end position="198"/>
    </location>
</feature>
<organism>
    <name type="scientific">Caenorhabditis elegans</name>
    <dbReference type="NCBI Taxonomy" id="6239"/>
    <lineage>
        <taxon>Eukaryota</taxon>
        <taxon>Metazoa</taxon>
        <taxon>Ecdysozoa</taxon>
        <taxon>Nematoda</taxon>
        <taxon>Chromadorea</taxon>
        <taxon>Rhabditida</taxon>
        <taxon>Rhabditina</taxon>
        <taxon>Rhabditomorpha</taxon>
        <taxon>Rhabditoidea</taxon>
        <taxon>Rhabditidae</taxon>
        <taxon>Peloderinae</taxon>
        <taxon>Caenorhabditis</taxon>
    </lineage>
</organism>
<reference key="1">
    <citation type="journal article" date="1998" name="Science">
        <title>Genome sequence of the nematode C. elegans: a platform for investigating biology.</title>
        <authorList>
            <consortium name="The C. elegans sequencing consortium"/>
        </authorList>
    </citation>
    <scope>NUCLEOTIDE SEQUENCE [LARGE SCALE GENOMIC DNA]</scope>
    <source>
        <strain>Bristol N2</strain>
    </source>
</reference>